<accession>C3LAZ9</accession>
<name>METK_BACAC</name>
<reference key="1">
    <citation type="submission" date="2008-10" db="EMBL/GenBank/DDBJ databases">
        <title>Genome sequence of Bacillus anthracis str. CDC 684.</title>
        <authorList>
            <person name="Dodson R.J."/>
            <person name="Munk A.C."/>
            <person name="Brettin T."/>
            <person name="Bruce D."/>
            <person name="Detter C."/>
            <person name="Tapia R."/>
            <person name="Han C."/>
            <person name="Sutton G."/>
            <person name="Sims D."/>
        </authorList>
    </citation>
    <scope>NUCLEOTIDE SEQUENCE [LARGE SCALE GENOMIC DNA]</scope>
    <source>
        <strain>CDC 684 / NRRL 3495</strain>
    </source>
</reference>
<sequence>MTKKRHLFTSESVTEGHPDKICDQISDSILDAILSKDANARVACETTVTTGLVLVAGEITTSTYVDIPKIVRETIQGIGYTRAKYGFDAETCAVLTSIDEQSADIAMGVDQALEAREGQMTDAEIEAIGAGDQGLMFGFACNETQELMPLPISLAHKLARRLTEVRKNDTLSYLRPDGKTQVTVEYDENGKPVRVDTIVISTQHHPDVTWEEIDRDLKEHVIKAVVPAELIDGETKFFINPTGRFVIGGPQGDAGLTGRKIIVDTYGGYARHGGGAFSGKDATKVDRSAAYAARYVAKNIVAAGLAEKAEVQLAYAIGVAQPVSISVDTFGTGKVSEDVLVELVRNNFDLRPAGIIKMLDLRRPIYKQTAAYGHFGRTDVDLSWERTDKAAALKEQAGL</sequence>
<keyword id="KW-0067">ATP-binding</keyword>
<keyword id="KW-0963">Cytoplasm</keyword>
<keyword id="KW-0460">Magnesium</keyword>
<keyword id="KW-0479">Metal-binding</keyword>
<keyword id="KW-0547">Nucleotide-binding</keyword>
<keyword id="KW-0554">One-carbon metabolism</keyword>
<keyword id="KW-0630">Potassium</keyword>
<keyword id="KW-0808">Transferase</keyword>
<protein>
    <recommendedName>
        <fullName evidence="1">S-adenosylmethionine synthase</fullName>
        <shortName evidence="1">AdoMet synthase</shortName>
        <ecNumber evidence="1">2.5.1.6</ecNumber>
    </recommendedName>
    <alternativeName>
        <fullName evidence="1">MAT</fullName>
    </alternativeName>
    <alternativeName>
        <fullName evidence="1">Methionine adenosyltransferase</fullName>
    </alternativeName>
</protein>
<dbReference type="EC" id="2.5.1.6" evidence="1"/>
<dbReference type="EMBL" id="CP001215">
    <property type="protein sequence ID" value="ACP16022.1"/>
    <property type="molecule type" value="Genomic_DNA"/>
</dbReference>
<dbReference type="RefSeq" id="WP_000163125.1">
    <property type="nucleotide sequence ID" value="NC_012581.1"/>
</dbReference>
<dbReference type="SMR" id="C3LAZ9"/>
<dbReference type="GeneID" id="75087933"/>
<dbReference type="KEGG" id="bah:BAMEG_5052"/>
<dbReference type="HOGENOM" id="CLU_041802_1_1_9"/>
<dbReference type="UniPathway" id="UPA00315">
    <property type="reaction ID" value="UER00080"/>
</dbReference>
<dbReference type="GO" id="GO:0005737">
    <property type="term" value="C:cytoplasm"/>
    <property type="evidence" value="ECO:0007669"/>
    <property type="project" value="UniProtKB-SubCell"/>
</dbReference>
<dbReference type="GO" id="GO:0005524">
    <property type="term" value="F:ATP binding"/>
    <property type="evidence" value="ECO:0007669"/>
    <property type="project" value="UniProtKB-UniRule"/>
</dbReference>
<dbReference type="GO" id="GO:0000287">
    <property type="term" value="F:magnesium ion binding"/>
    <property type="evidence" value="ECO:0007669"/>
    <property type="project" value="UniProtKB-UniRule"/>
</dbReference>
<dbReference type="GO" id="GO:0004478">
    <property type="term" value="F:methionine adenosyltransferase activity"/>
    <property type="evidence" value="ECO:0007669"/>
    <property type="project" value="UniProtKB-UniRule"/>
</dbReference>
<dbReference type="GO" id="GO:0006730">
    <property type="term" value="P:one-carbon metabolic process"/>
    <property type="evidence" value="ECO:0007669"/>
    <property type="project" value="UniProtKB-KW"/>
</dbReference>
<dbReference type="GO" id="GO:0006556">
    <property type="term" value="P:S-adenosylmethionine biosynthetic process"/>
    <property type="evidence" value="ECO:0007669"/>
    <property type="project" value="UniProtKB-UniRule"/>
</dbReference>
<dbReference type="CDD" id="cd18079">
    <property type="entry name" value="S-AdoMet_synt"/>
    <property type="match status" value="1"/>
</dbReference>
<dbReference type="FunFam" id="3.30.300.10:FF:000003">
    <property type="entry name" value="S-adenosylmethionine synthase"/>
    <property type="match status" value="1"/>
</dbReference>
<dbReference type="FunFam" id="3.30.300.10:FF:000004">
    <property type="entry name" value="S-adenosylmethionine synthase"/>
    <property type="match status" value="1"/>
</dbReference>
<dbReference type="Gene3D" id="3.30.300.10">
    <property type="match status" value="3"/>
</dbReference>
<dbReference type="HAMAP" id="MF_00086">
    <property type="entry name" value="S_AdoMet_synth1"/>
    <property type="match status" value="1"/>
</dbReference>
<dbReference type="InterPro" id="IPR022631">
    <property type="entry name" value="ADOMET_SYNTHASE_CS"/>
</dbReference>
<dbReference type="InterPro" id="IPR022630">
    <property type="entry name" value="S-AdoMet_synt_C"/>
</dbReference>
<dbReference type="InterPro" id="IPR022629">
    <property type="entry name" value="S-AdoMet_synt_central"/>
</dbReference>
<dbReference type="InterPro" id="IPR022628">
    <property type="entry name" value="S-AdoMet_synt_N"/>
</dbReference>
<dbReference type="InterPro" id="IPR002133">
    <property type="entry name" value="S-AdoMet_synthetase"/>
</dbReference>
<dbReference type="InterPro" id="IPR022636">
    <property type="entry name" value="S-AdoMet_synthetase_sfam"/>
</dbReference>
<dbReference type="NCBIfam" id="TIGR01034">
    <property type="entry name" value="metK"/>
    <property type="match status" value="1"/>
</dbReference>
<dbReference type="PANTHER" id="PTHR11964">
    <property type="entry name" value="S-ADENOSYLMETHIONINE SYNTHETASE"/>
    <property type="match status" value="1"/>
</dbReference>
<dbReference type="Pfam" id="PF02773">
    <property type="entry name" value="S-AdoMet_synt_C"/>
    <property type="match status" value="1"/>
</dbReference>
<dbReference type="Pfam" id="PF02772">
    <property type="entry name" value="S-AdoMet_synt_M"/>
    <property type="match status" value="1"/>
</dbReference>
<dbReference type="Pfam" id="PF00438">
    <property type="entry name" value="S-AdoMet_synt_N"/>
    <property type="match status" value="1"/>
</dbReference>
<dbReference type="PIRSF" id="PIRSF000497">
    <property type="entry name" value="MAT"/>
    <property type="match status" value="1"/>
</dbReference>
<dbReference type="SUPFAM" id="SSF55973">
    <property type="entry name" value="S-adenosylmethionine synthetase"/>
    <property type="match status" value="3"/>
</dbReference>
<dbReference type="PROSITE" id="PS00376">
    <property type="entry name" value="ADOMET_SYNTHASE_1"/>
    <property type="match status" value="1"/>
</dbReference>
<dbReference type="PROSITE" id="PS00377">
    <property type="entry name" value="ADOMET_SYNTHASE_2"/>
    <property type="match status" value="1"/>
</dbReference>
<proteinExistence type="inferred from homology"/>
<organism>
    <name type="scientific">Bacillus anthracis (strain CDC 684 / NRRL 3495)</name>
    <dbReference type="NCBI Taxonomy" id="568206"/>
    <lineage>
        <taxon>Bacteria</taxon>
        <taxon>Bacillati</taxon>
        <taxon>Bacillota</taxon>
        <taxon>Bacilli</taxon>
        <taxon>Bacillales</taxon>
        <taxon>Bacillaceae</taxon>
        <taxon>Bacillus</taxon>
        <taxon>Bacillus cereus group</taxon>
    </lineage>
</organism>
<feature type="chain" id="PRO_1000196683" description="S-adenosylmethionine synthase">
    <location>
        <begin position="1"/>
        <end position="399"/>
    </location>
</feature>
<feature type="region of interest" description="Flexible loop" evidence="1">
    <location>
        <begin position="101"/>
        <end position="111"/>
    </location>
</feature>
<feature type="binding site" description="in other chain" evidence="1">
    <location>
        <position position="17"/>
    </location>
    <ligand>
        <name>ATP</name>
        <dbReference type="ChEBI" id="CHEBI:30616"/>
        <note>ligand shared between two neighboring subunits</note>
    </ligand>
</feature>
<feature type="binding site" evidence="1">
    <location>
        <position position="19"/>
    </location>
    <ligand>
        <name>Mg(2+)</name>
        <dbReference type="ChEBI" id="CHEBI:18420"/>
    </ligand>
</feature>
<feature type="binding site" evidence="1">
    <location>
        <position position="45"/>
    </location>
    <ligand>
        <name>K(+)</name>
        <dbReference type="ChEBI" id="CHEBI:29103"/>
    </ligand>
</feature>
<feature type="binding site" description="in other chain" evidence="1">
    <location>
        <position position="58"/>
    </location>
    <ligand>
        <name>L-methionine</name>
        <dbReference type="ChEBI" id="CHEBI:57844"/>
        <note>ligand shared between two neighboring subunits</note>
    </ligand>
</feature>
<feature type="binding site" description="in other chain" evidence="1">
    <location>
        <position position="101"/>
    </location>
    <ligand>
        <name>L-methionine</name>
        <dbReference type="ChEBI" id="CHEBI:57844"/>
        <note>ligand shared between two neighboring subunits</note>
    </ligand>
</feature>
<feature type="binding site" description="in other chain" evidence="1">
    <location>
        <begin position="177"/>
        <end position="179"/>
    </location>
    <ligand>
        <name>ATP</name>
        <dbReference type="ChEBI" id="CHEBI:30616"/>
        <note>ligand shared between two neighboring subunits</note>
    </ligand>
</feature>
<feature type="binding site" description="in other chain" evidence="1">
    <location>
        <begin position="244"/>
        <end position="245"/>
    </location>
    <ligand>
        <name>ATP</name>
        <dbReference type="ChEBI" id="CHEBI:30616"/>
        <note>ligand shared between two neighboring subunits</note>
    </ligand>
</feature>
<feature type="binding site" evidence="1">
    <location>
        <position position="253"/>
    </location>
    <ligand>
        <name>ATP</name>
        <dbReference type="ChEBI" id="CHEBI:30616"/>
        <note>ligand shared between two neighboring subunits</note>
    </ligand>
</feature>
<feature type="binding site" evidence="1">
    <location>
        <position position="253"/>
    </location>
    <ligand>
        <name>L-methionine</name>
        <dbReference type="ChEBI" id="CHEBI:57844"/>
        <note>ligand shared between two neighboring subunits</note>
    </ligand>
</feature>
<feature type="binding site" description="in other chain" evidence="1">
    <location>
        <begin position="259"/>
        <end position="260"/>
    </location>
    <ligand>
        <name>ATP</name>
        <dbReference type="ChEBI" id="CHEBI:30616"/>
        <note>ligand shared between two neighboring subunits</note>
    </ligand>
</feature>
<feature type="binding site" evidence="1">
    <location>
        <position position="276"/>
    </location>
    <ligand>
        <name>ATP</name>
        <dbReference type="ChEBI" id="CHEBI:30616"/>
        <note>ligand shared between two neighboring subunits</note>
    </ligand>
</feature>
<feature type="binding site" evidence="1">
    <location>
        <position position="280"/>
    </location>
    <ligand>
        <name>ATP</name>
        <dbReference type="ChEBI" id="CHEBI:30616"/>
        <note>ligand shared between two neighboring subunits</note>
    </ligand>
</feature>
<feature type="binding site" description="in other chain" evidence="1">
    <location>
        <position position="284"/>
    </location>
    <ligand>
        <name>L-methionine</name>
        <dbReference type="ChEBI" id="CHEBI:57844"/>
        <note>ligand shared between two neighboring subunits</note>
    </ligand>
</feature>
<gene>
    <name evidence="1" type="primary">metK</name>
    <name type="ordered locus">BAMEG_5052</name>
</gene>
<comment type="function">
    <text evidence="1">Catalyzes the formation of S-adenosylmethionine (AdoMet) from methionine and ATP. The overall synthetic reaction is composed of two sequential steps, AdoMet formation and the subsequent tripolyphosphate hydrolysis which occurs prior to release of AdoMet from the enzyme.</text>
</comment>
<comment type="catalytic activity">
    <reaction evidence="1">
        <text>L-methionine + ATP + H2O = S-adenosyl-L-methionine + phosphate + diphosphate</text>
        <dbReference type="Rhea" id="RHEA:21080"/>
        <dbReference type="ChEBI" id="CHEBI:15377"/>
        <dbReference type="ChEBI" id="CHEBI:30616"/>
        <dbReference type="ChEBI" id="CHEBI:33019"/>
        <dbReference type="ChEBI" id="CHEBI:43474"/>
        <dbReference type="ChEBI" id="CHEBI:57844"/>
        <dbReference type="ChEBI" id="CHEBI:59789"/>
        <dbReference type="EC" id="2.5.1.6"/>
    </reaction>
</comment>
<comment type="cofactor">
    <cofactor evidence="1">
        <name>Mg(2+)</name>
        <dbReference type="ChEBI" id="CHEBI:18420"/>
    </cofactor>
    <text evidence="1">Binds 2 divalent ions per subunit.</text>
</comment>
<comment type="cofactor">
    <cofactor evidence="1">
        <name>K(+)</name>
        <dbReference type="ChEBI" id="CHEBI:29103"/>
    </cofactor>
    <text evidence="1">Binds 1 potassium ion per subunit.</text>
</comment>
<comment type="pathway">
    <text evidence="1">Amino-acid biosynthesis; S-adenosyl-L-methionine biosynthesis; S-adenosyl-L-methionine from L-methionine: step 1/1.</text>
</comment>
<comment type="subunit">
    <text evidence="1">Homotetramer; dimer of dimers.</text>
</comment>
<comment type="subcellular location">
    <subcellularLocation>
        <location evidence="1">Cytoplasm</location>
    </subcellularLocation>
</comment>
<comment type="similarity">
    <text evidence="1">Belongs to the AdoMet synthase family.</text>
</comment>
<evidence type="ECO:0000255" key="1">
    <source>
        <dbReference type="HAMAP-Rule" id="MF_00086"/>
    </source>
</evidence>